<sequence>MPRRRRSSSRPVRRRRRPRVSRRRRRRGGRRRR</sequence>
<proteinExistence type="evidence at protein level"/>
<name>PRT2B_ONCMY</name>
<protein>
    <recommendedName>
        <fullName>Protamine-2B</fullName>
    </recommendedName>
    <alternativeName>
        <fullName>Salmine-AI</fullName>
    </alternativeName>
</protein>
<evidence type="ECO:0000256" key="1">
    <source>
        <dbReference type="SAM" id="MobiDB-lite"/>
    </source>
</evidence>
<evidence type="ECO:0000269" key="2">
    <source>
    </source>
</evidence>
<dbReference type="EMBL" id="X01599">
    <property type="protein sequence ID" value="CAA25752.1"/>
    <property type="molecule type" value="Genomic_DNA"/>
</dbReference>
<dbReference type="EMBL" id="M10718">
    <property type="protein sequence ID" value="AAA49608.1"/>
    <property type="molecule type" value="mRNA"/>
</dbReference>
<dbReference type="PIR" id="A27776">
    <property type="entry name" value="IRTR59"/>
</dbReference>
<dbReference type="Proteomes" id="UP000694395">
    <property type="component" value="Unplaced"/>
</dbReference>
<dbReference type="GO" id="GO:0000786">
    <property type="term" value="C:nucleosome"/>
    <property type="evidence" value="ECO:0007669"/>
    <property type="project" value="UniProtKB-KW"/>
</dbReference>
<dbReference type="GO" id="GO:0005634">
    <property type="term" value="C:nucleus"/>
    <property type="evidence" value="ECO:0007669"/>
    <property type="project" value="UniProtKB-SubCell"/>
</dbReference>
<dbReference type="GO" id="GO:0003677">
    <property type="term" value="F:DNA binding"/>
    <property type="evidence" value="ECO:0007669"/>
    <property type="project" value="UniProtKB-KW"/>
</dbReference>
<dbReference type="GO" id="GO:0030154">
    <property type="term" value="P:cell differentiation"/>
    <property type="evidence" value="ECO:0007669"/>
    <property type="project" value="UniProtKB-KW"/>
</dbReference>
<dbReference type="GO" id="GO:0030261">
    <property type="term" value="P:chromosome condensation"/>
    <property type="evidence" value="ECO:0007669"/>
    <property type="project" value="UniProtKB-KW"/>
</dbReference>
<dbReference type="GO" id="GO:0007283">
    <property type="term" value="P:spermatogenesis"/>
    <property type="evidence" value="ECO:0007669"/>
    <property type="project" value="UniProtKB-KW"/>
</dbReference>
<feature type="initiator methionine" description="Removed" evidence="2">
    <location>
        <position position="1"/>
    </location>
</feature>
<feature type="peptide" id="PRO_0000044837" description="Protamine-2B">
    <location>
        <begin position="2"/>
        <end position="33"/>
    </location>
</feature>
<feature type="region of interest" description="Disordered" evidence="1">
    <location>
        <begin position="1"/>
        <end position="33"/>
    </location>
</feature>
<organism>
    <name type="scientific">Oncorhynchus mykiss</name>
    <name type="common">Rainbow trout</name>
    <name type="synonym">Salmo gairdneri</name>
    <dbReference type="NCBI Taxonomy" id="8022"/>
    <lineage>
        <taxon>Eukaryota</taxon>
        <taxon>Metazoa</taxon>
        <taxon>Chordata</taxon>
        <taxon>Craniata</taxon>
        <taxon>Vertebrata</taxon>
        <taxon>Euteleostomi</taxon>
        <taxon>Actinopterygii</taxon>
        <taxon>Neopterygii</taxon>
        <taxon>Teleostei</taxon>
        <taxon>Protacanthopterygii</taxon>
        <taxon>Salmoniformes</taxon>
        <taxon>Salmonidae</taxon>
        <taxon>Salmoninae</taxon>
        <taxon>Oncorhynchus</taxon>
    </lineage>
</organism>
<accession>P69015</accession>
<accession>P02327</accession>
<keyword id="KW-0158">Chromosome</keyword>
<keyword id="KW-0217">Developmental protein</keyword>
<keyword id="KW-0221">Differentiation</keyword>
<keyword id="KW-0903">Direct protein sequencing</keyword>
<keyword id="KW-0226">DNA condensation</keyword>
<keyword id="KW-0238">DNA-binding</keyword>
<keyword id="KW-0544">Nucleosome core</keyword>
<keyword id="KW-0539">Nucleus</keyword>
<keyword id="KW-0744">Spermatogenesis</keyword>
<reference key="1">
    <citation type="journal article" date="1983" name="Nucleic Acids Res.">
        <title>Sequence homologies in the protamine gene family of rainbow trout.</title>
        <authorList>
            <person name="Aiken J.M."/>
            <person name="McKenzie D."/>
            <person name="Zhao H.-Z."/>
            <person name="States J.C."/>
            <person name="Dixon G.H."/>
        </authorList>
    </citation>
    <scope>NUCLEOTIDE SEQUENCE [GENOMIC DNA] (CLONE TP21)</scope>
</reference>
<reference key="2">
    <citation type="journal article" date="1986" name="Eur. J. Biochem.">
        <title>Rainbow trout protamines. Amino acid sequences of six distinct proteins from a single testis.</title>
        <authorList>
            <person name="McKay D.J."/>
            <person name="Renaux B.S."/>
            <person name="Dixon G.H."/>
        </authorList>
    </citation>
    <scope>PROTEIN SEQUENCE OF 2-33</scope>
</reference>
<reference key="3">
    <citation type="journal article" date="1981" name="Nucleic Acids Res.">
        <title>Molecular analysis of the protamine multi-gene family in rainbow trout testis.</title>
        <authorList>
            <person name="Gedamu L."/>
            <person name="Wosnick M.A."/>
            <person name="Connor W."/>
            <person name="Watson D.C."/>
            <person name="Dixon G.H."/>
            <person name="Iatrou K."/>
        </authorList>
    </citation>
    <scope>NUCLEOTIDE SEQUENCE OF 7-33 (CLONE PRTP59)</scope>
</reference>
<reference key="4">
    <citation type="journal article" date="1979" name="Nature">
        <title>Sequence divergence of rainbow trout protamine mRNAs; comparison of coding and non-coding nucleotide sequences in three protamine cDNA plasmids.</title>
        <authorList>
            <person name="Jenkins J.R."/>
        </authorList>
    </citation>
    <scope>NUCLEOTIDE SEQUENCE [MRNA] OF 7-33 (CLONE PTP11)</scope>
</reference>
<comment type="function">
    <text>Protamines substitute for histones in the chromatin of sperm during the haploid phase of spermatogenesis. They compact sperm DNA into a highly condensed, stable and inactive complex.</text>
</comment>
<comment type="subcellular location">
    <subcellularLocation>
        <location>Nucleus</location>
    </subcellularLocation>
    <subcellularLocation>
        <location>Chromosome</location>
    </subcellularLocation>
</comment>
<comment type="tissue specificity">
    <text>Testis.</text>
</comment>